<proteinExistence type="inferred from homology"/>
<gene>
    <name evidence="1" type="primary">coaA</name>
    <name type="synonym">panK</name>
    <name type="ordered locus">blr0656</name>
</gene>
<name>COAA_BRADU</name>
<evidence type="ECO:0000255" key="1">
    <source>
        <dbReference type="HAMAP-Rule" id="MF_00215"/>
    </source>
</evidence>
<evidence type="ECO:0000305" key="2"/>
<organism>
    <name type="scientific">Bradyrhizobium diazoefficiens (strain JCM 10833 / BCRC 13528 / IAM 13628 / NBRC 14792 / USDA 110)</name>
    <dbReference type="NCBI Taxonomy" id="224911"/>
    <lineage>
        <taxon>Bacteria</taxon>
        <taxon>Pseudomonadati</taxon>
        <taxon>Pseudomonadota</taxon>
        <taxon>Alphaproteobacteria</taxon>
        <taxon>Hyphomicrobiales</taxon>
        <taxon>Nitrobacteraceae</taxon>
        <taxon>Bradyrhizobium</taxon>
    </lineage>
</organism>
<protein>
    <recommendedName>
        <fullName evidence="1">Pantothenate kinase</fullName>
        <ecNumber evidence="1">2.7.1.33</ecNumber>
    </recommendedName>
    <alternativeName>
        <fullName evidence="1">Pantothenic acid kinase</fullName>
    </alternativeName>
</protein>
<reference key="1">
    <citation type="journal article" date="2002" name="DNA Res.">
        <title>Complete genomic sequence of nitrogen-fixing symbiotic bacterium Bradyrhizobium japonicum USDA110.</title>
        <authorList>
            <person name="Kaneko T."/>
            <person name="Nakamura Y."/>
            <person name="Sato S."/>
            <person name="Minamisawa K."/>
            <person name="Uchiumi T."/>
            <person name="Sasamoto S."/>
            <person name="Watanabe A."/>
            <person name="Idesawa K."/>
            <person name="Iriguchi M."/>
            <person name="Kawashima K."/>
            <person name="Kohara M."/>
            <person name="Matsumoto M."/>
            <person name="Shimpo S."/>
            <person name="Tsuruoka H."/>
            <person name="Wada T."/>
            <person name="Yamada M."/>
            <person name="Tabata S."/>
        </authorList>
    </citation>
    <scope>NUCLEOTIDE SEQUENCE [LARGE SCALE GENOMIC DNA]</scope>
    <source>
        <strain>JCM 10833 / BCRC 13528 / IAM 13628 / NBRC 14792 / USDA 110</strain>
    </source>
</reference>
<keyword id="KW-0067">ATP-binding</keyword>
<keyword id="KW-0173">Coenzyme A biosynthesis</keyword>
<keyword id="KW-0963">Cytoplasm</keyword>
<keyword id="KW-0418">Kinase</keyword>
<keyword id="KW-0547">Nucleotide-binding</keyword>
<keyword id="KW-1185">Reference proteome</keyword>
<keyword id="KW-0808">Transferase</keyword>
<sequence>MDIRAPEQQYNPYRVYTREQWARLRDDTPMTLEPGEFDRLRSLHDRLDLQEVEDIYLPLSRLLSIYVDAMQRLYYAERQFLNIRDRKMPYIIGVAGSVAVGKSTTARVLQALLARWSPRPKVDLITTDGFLYPNAVLDRQGIMQKKGFPESYDLPLLLGFLSDIKAGRRHVRAPVYSHLTYDIVPNQWVEIDQPDILIVEGVNVLQTGKLPRDGKAVPVVSDFFDFSVYIDADEAALRRWYIKRFLALRDTAFTNPKSYFNRYALLSDEEATATAIAIWERTNLANLEDNILPTRPRATLILKKGPDHVVESVALRRL</sequence>
<feature type="chain" id="PRO_0000194420" description="Pantothenate kinase">
    <location>
        <begin position="1"/>
        <end position="318"/>
    </location>
</feature>
<feature type="binding site" evidence="1">
    <location>
        <begin position="96"/>
        <end position="103"/>
    </location>
    <ligand>
        <name>ATP</name>
        <dbReference type="ChEBI" id="CHEBI:30616"/>
    </ligand>
</feature>
<accession>Q89WM2</accession>
<comment type="catalytic activity">
    <reaction evidence="1">
        <text>(R)-pantothenate + ATP = (R)-4'-phosphopantothenate + ADP + H(+)</text>
        <dbReference type="Rhea" id="RHEA:16373"/>
        <dbReference type="ChEBI" id="CHEBI:10986"/>
        <dbReference type="ChEBI" id="CHEBI:15378"/>
        <dbReference type="ChEBI" id="CHEBI:29032"/>
        <dbReference type="ChEBI" id="CHEBI:30616"/>
        <dbReference type="ChEBI" id="CHEBI:456216"/>
        <dbReference type="EC" id="2.7.1.33"/>
    </reaction>
</comment>
<comment type="pathway">
    <text evidence="1">Cofactor biosynthesis; coenzyme A biosynthesis; CoA from (R)-pantothenate: step 1/5.</text>
</comment>
<comment type="subcellular location">
    <subcellularLocation>
        <location evidence="1">Cytoplasm</location>
    </subcellularLocation>
</comment>
<comment type="similarity">
    <text evidence="1">Belongs to the prokaryotic pantothenate kinase family.</text>
</comment>
<comment type="sequence caution" evidence="2">
    <conflict type="erroneous initiation">
        <sequence resource="EMBL-CDS" id="BAC45921"/>
    </conflict>
</comment>
<dbReference type="EC" id="2.7.1.33" evidence="1"/>
<dbReference type="EMBL" id="BA000040">
    <property type="protein sequence ID" value="BAC45921.1"/>
    <property type="status" value="ALT_INIT"/>
    <property type="molecule type" value="Genomic_DNA"/>
</dbReference>
<dbReference type="RefSeq" id="NP_767296.1">
    <property type="nucleotide sequence ID" value="NC_004463.1"/>
</dbReference>
<dbReference type="RefSeq" id="WP_027543772.1">
    <property type="nucleotide sequence ID" value="NZ_CP011360.1"/>
</dbReference>
<dbReference type="SMR" id="Q89WM2"/>
<dbReference type="FunCoup" id="Q89WM2">
    <property type="interactions" value="205"/>
</dbReference>
<dbReference type="STRING" id="224911.AAV28_00115"/>
<dbReference type="EnsemblBacteria" id="BAC45921">
    <property type="protein sequence ID" value="BAC45921"/>
    <property type="gene ID" value="BAC45921"/>
</dbReference>
<dbReference type="GeneID" id="46487929"/>
<dbReference type="KEGG" id="bja:blr0656"/>
<dbReference type="PATRIC" id="fig|224911.44.peg.25"/>
<dbReference type="eggNOG" id="COG1072">
    <property type="taxonomic scope" value="Bacteria"/>
</dbReference>
<dbReference type="HOGENOM" id="CLU_053818_1_1_5"/>
<dbReference type="InParanoid" id="Q89WM2"/>
<dbReference type="OrthoDB" id="1550976at2"/>
<dbReference type="UniPathway" id="UPA00241">
    <property type="reaction ID" value="UER00352"/>
</dbReference>
<dbReference type="Proteomes" id="UP000002526">
    <property type="component" value="Chromosome"/>
</dbReference>
<dbReference type="GO" id="GO:0005737">
    <property type="term" value="C:cytoplasm"/>
    <property type="evidence" value="ECO:0000318"/>
    <property type="project" value="GO_Central"/>
</dbReference>
<dbReference type="GO" id="GO:0005524">
    <property type="term" value="F:ATP binding"/>
    <property type="evidence" value="ECO:0007669"/>
    <property type="project" value="UniProtKB-UniRule"/>
</dbReference>
<dbReference type="GO" id="GO:0004594">
    <property type="term" value="F:pantothenate kinase activity"/>
    <property type="evidence" value="ECO:0000318"/>
    <property type="project" value="GO_Central"/>
</dbReference>
<dbReference type="GO" id="GO:0015937">
    <property type="term" value="P:coenzyme A biosynthetic process"/>
    <property type="evidence" value="ECO:0000318"/>
    <property type="project" value="GO_Central"/>
</dbReference>
<dbReference type="CDD" id="cd02025">
    <property type="entry name" value="PanK"/>
    <property type="match status" value="1"/>
</dbReference>
<dbReference type="FunFam" id="3.40.50.300:FF:000242">
    <property type="entry name" value="Pantothenate kinase"/>
    <property type="match status" value="1"/>
</dbReference>
<dbReference type="Gene3D" id="3.40.50.300">
    <property type="entry name" value="P-loop containing nucleotide triphosphate hydrolases"/>
    <property type="match status" value="1"/>
</dbReference>
<dbReference type="HAMAP" id="MF_00215">
    <property type="entry name" value="Pantothen_kinase_1"/>
    <property type="match status" value="1"/>
</dbReference>
<dbReference type="InterPro" id="IPR027417">
    <property type="entry name" value="P-loop_NTPase"/>
</dbReference>
<dbReference type="InterPro" id="IPR004566">
    <property type="entry name" value="PanK"/>
</dbReference>
<dbReference type="InterPro" id="IPR006083">
    <property type="entry name" value="PRK/URK"/>
</dbReference>
<dbReference type="NCBIfam" id="TIGR00554">
    <property type="entry name" value="panK_bact"/>
    <property type="match status" value="1"/>
</dbReference>
<dbReference type="PANTHER" id="PTHR10285">
    <property type="entry name" value="URIDINE KINASE"/>
    <property type="match status" value="1"/>
</dbReference>
<dbReference type="Pfam" id="PF00485">
    <property type="entry name" value="PRK"/>
    <property type="match status" value="1"/>
</dbReference>
<dbReference type="PIRSF" id="PIRSF000545">
    <property type="entry name" value="Pantothenate_kin"/>
    <property type="match status" value="1"/>
</dbReference>
<dbReference type="SUPFAM" id="SSF52540">
    <property type="entry name" value="P-loop containing nucleoside triphosphate hydrolases"/>
    <property type="match status" value="1"/>
</dbReference>